<reference key="1">
    <citation type="journal article" date="2009" name="Appl. Environ. Microbiol.">
        <title>Rhizobium sp. strain NGR234 possesses a remarkable number of secretion systems.</title>
        <authorList>
            <person name="Schmeisser C."/>
            <person name="Liesegang H."/>
            <person name="Krysciak D."/>
            <person name="Bakkou N."/>
            <person name="Le Quere A."/>
            <person name="Wollherr A."/>
            <person name="Heinemeyer I."/>
            <person name="Morgenstern B."/>
            <person name="Pommerening-Roeser A."/>
            <person name="Flores M."/>
            <person name="Palacios R."/>
            <person name="Brenner S."/>
            <person name="Gottschalk G."/>
            <person name="Schmitz R.A."/>
            <person name="Broughton W.J."/>
            <person name="Perret X."/>
            <person name="Strittmatter A.W."/>
            <person name="Streit W.R."/>
        </authorList>
    </citation>
    <scope>NUCLEOTIDE SEQUENCE [LARGE SCALE GENOMIC DNA]</scope>
    <source>
        <strain>NBRC 101917 / NGR234</strain>
    </source>
</reference>
<protein>
    <recommendedName>
        <fullName evidence="1">Phosphoribosyl-AMP cyclohydrolase</fullName>
        <shortName evidence="1">PRA-CH</shortName>
        <ecNumber evidence="1">3.5.4.19</ecNumber>
    </recommendedName>
</protein>
<keyword id="KW-0028">Amino-acid biosynthesis</keyword>
<keyword id="KW-0963">Cytoplasm</keyword>
<keyword id="KW-0368">Histidine biosynthesis</keyword>
<keyword id="KW-0378">Hydrolase</keyword>
<keyword id="KW-0460">Magnesium</keyword>
<keyword id="KW-0479">Metal-binding</keyword>
<keyword id="KW-1185">Reference proteome</keyword>
<keyword id="KW-0862">Zinc</keyword>
<dbReference type="EC" id="3.5.4.19" evidence="1"/>
<dbReference type="EMBL" id="CP001389">
    <property type="protein sequence ID" value="ACP25037.1"/>
    <property type="molecule type" value="Genomic_DNA"/>
</dbReference>
<dbReference type="RefSeq" id="WP_012707814.1">
    <property type="nucleotide sequence ID" value="NC_012587.1"/>
</dbReference>
<dbReference type="RefSeq" id="YP_002825790.1">
    <property type="nucleotide sequence ID" value="NC_012587.1"/>
</dbReference>
<dbReference type="SMR" id="C3MB44"/>
<dbReference type="STRING" id="394.NGR_c12560"/>
<dbReference type="KEGG" id="rhi:NGR_c12560"/>
<dbReference type="PATRIC" id="fig|394.7.peg.4074"/>
<dbReference type="eggNOG" id="COG0139">
    <property type="taxonomic scope" value="Bacteria"/>
</dbReference>
<dbReference type="HOGENOM" id="CLU_048577_5_0_5"/>
<dbReference type="OrthoDB" id="9795769at2"/>
<dbReference type="UniPathway" id="UPA00031">
    <property type="reaction ID" value="UER00008"/>
</dbReference>
<dbReference type="Proteomes" id="UP000001054">
    <property type="component" value="Chromosome"/>
</dbReference>
<dbReference type="GO" id="GO:0005737">
    <property type="term" value="C:cytoplasm"/>
    <property type="evidence" value="ECO:0007669"/>
    <property type="project" value="UniProtKB-SubCell"/>
</dbReference>
<dbReference type="GO" id="GO:0000287">
    <property type="term" value="F:magnesium ion binding"/>
    <property type="evidence" value="ECO:0007669"/>
    <property type="project" value="UniProtKB-UniRule"/>
</dbReference>
<dbReference type="GO" id="GO:0004635">
    <property type="term" value="F:phosphoribosyl-AMP cyclohydrolase activity"/>
    <property type="evidence" value="ECO:0007669"/>
    <property type="project" value="UniProtKB-UniRule"/>
</dbReference>
<dbReference type="GO" id="GO:0008270">
    <property type="term" value="F:zinc ion binding"/>
    <property type="evidence" value="ECO:0007669"/>
    <property type="project" value="UniProtKB-UniRule"/>
</dbReference>
<dbReference type="GO" id="GO:0000105">
    <property type="term" value="P:L-histidine biosynthetic process"/>
    <property type="evidence" value="ECO:0007669"/>
    <property type="project" value="UniProtKB-UniRule"/>
</dbReference>
<dbReference type="FunFam" id="3.10.20.810:FF:000001">
    <property type="entry name" value="Histidine biosynthesis bifunctional protein HisIE"/>
    <property type="match status" value="1"/>
</dbReference>
<dbReference type="Gene3D" id="4.10.80.70">
    <property type="match status" value="1"/>
</dbReference>
<dbReference type="Gene3D" id="3.10.20.810">
    <property type="entry name" value="Phosphoribosyl-AMP cyclohydrolase"/>
    <property type="match status" value="1"/>
</dbReference>
<dbReference type="HAMAP" id="MF_01021">
    <property type="entry name" value="HisI"/>
    <property type="match status" value="1"/>
</dbReference>
<dbReference type="InterPro" id="IPR026660">
    <property type="entry name" value="PRA-CH"/>
</dbReference>
<dbReference type="InterPro" id="IPR002496">
    <property type="entry name" value="PRib_AMP_CycHydrolase_dom"/>
</dbReference>
<dbReference type="InterPro" id="IPR038019">
    <property type="entry name" value="PRib_AMP_CycHydrolase_sf"/>
</dbReference>
<dbReference type="NCBIfam" id="NF000768">
    <property type="entry name" value="PRK00051.1"/>
    <property type="match status" value="1"/>
</dbReference>
<dbReference type="PANTHER" id="PTHR42945">
    <property type="entry name" value="HISTIDINE BIOSYNTHESIS BIFUNCTIONAL PROTEIN"/>
    <property type="match status" value="1"/>
</dbReference>
<dbReference type="PANTHER" id="PTHR42945:SF1">
    <property type="entry name" value="HISTIDINE BIOSYNTHESIS BIFUNCTIONAL PROTEIN HIS7"/>
    <property type="match status" value="1"/>
</dbReference>
<dbReference type="Pfam" id="PF01502">
    <property type="entry name" value="PRA-CH"/>
    <property type="match status" value="1"/>
</dbReference>
<dbReference type="SUPFAM" id="SSF141734">
    <property type="entry name" value="HisI-like"/>
    <property type="match status" value="1"/>
</dbReference>
<proteinExistence type="inferred from homology"/>
<name>HIS3_SINFN</name>
<evidence type="ECO:0000255" key="1">
    <source>
        <dbReference type="HAMAP-Rule" id="MF_01021"/>
    </source>
</evidence>
<accession>C3MB44</accession>
<gene>
    <name evidence="1" type="primary">hisI</name>
    <name type="ordered locus">NGR_c12560</name>
</gene>
<comment type="function">
    <text evidence="1">Catalyzes the hydrolysis of the adenine ring of phosphoribosyl-AMP.</text>
</comment>
<comment type="catalytic activity">
    <reaction evidence="1">
        <text>1-(5-phospho-beta-D-ribosyl)-5'-AMP + H2O = 1-(5-phospho-beta-D-ribosyl)-5-[(5-phospho-beta-D-ribosylamino)methylideneamino]imidazole-4-carboxamide</text>
        <dbReference type="Rhea" id="RHEA:20049"/>
        <dbReference type="ChEBI" id="CHEBI:15377"/>
        <dbReference type="ChEBI" id="CHEBI:58435"/>
        <dbReference type="ChEBI" id="CHEBI:59457"/>
        <dbReference type="EC" id="3.5.4.19"/>
    </reaction>
</comment>
<comment type="cofactor">
    <cofactor evidence="1">
        <name>Mg(2+)</name>
        <dbReference type="ChEBI" id="CHEBI:18420"/>
    </cofactor>
    <text evidence="1">Binds 1 Mg(2+) ion per subunit.</text>
</comment>
<comment type="cofactor">
    <cofactor evidence="1">
        <name>Zn(2+)</name>
        <dbReference type="ChEBI" id="CHEBI:29105"/>
    </cofactor>
    <text evidence="1">Binds 1 zinc ion per subunit.</text>
</comment>
<comment type="pathway">
    <text evidence="1">Amino-acid biosynthesis; L-histidine biosynthesis; L-histidine from 5-phospho-alpha-D-ribose 1-diphosphate: step 3/9.</text>
</comment>
<comment type="subunit">
    <text evidence="1">Homodimer.</text>
</comment>
<comment type="subcellular location">
    <subcellularLocation>
        <location evidence="1">Cytoplasm</location>
    </subcellularLocation>
</comment>
<comment type="similarity">
    <text evidence="1">Belongs to the PRA-CH family.</text>
</comment>
<feature type="chain" id="PRO_1000149076" description="Phosphoribosyl-AMP cyclohydrolase">
    <location>
        <begin position="1"/>
        <end position="152"/>
    </location>
</feature>
<feature type="binding site" evidence="1">
    <location>
        <position position="92"/>
    </location>
    <ligand>
        <name>Mg(2+)</name>
        <dbReference type="ChEBI" id="CHEBI:18420"/>
    </ligand>
</feature>
<feature type="binding site" evidence="1">
    <location>
        <position position="93"/>
    </location>
    <ligand>
        <name>Zn(2+)</name>
        <dbReference type="ChEBI" id="CHEBI:29105"/>
        <note>ligand shared between dimeric partners</note>
    </ligand>
</feature>
<feature type="binding site" evidence="1">
    <location>
        <position position="94"/>
    </location>
    <ligand>
        <name>Mg(2+)</name>
        <dbReference type="ChEBI" id="CHEBI:18420"/>
    </ligand>
</feature>
<feature type="binding site" evidence="1">
    <location>
        <position position="96"/>
    </location>
    <ligand>
        <name>Mg(2+)</name>
        <dbReference type="ChEBI" id="CHEBI:18420"/>
    </ligand>
</feature>
<feature type="binding site" evidence="1">
    <location>
        <position position="111"/>
    </location>
    <ligand>
        <name>Zn(2+)</name>
        <dbReference type="ChEBI" id="CHEBI:29105"/>
        <note>ligand shared between dimeric partners</note>
    </ligand>
</feature>
<feature type="binding site" evidence="1">
    <location>
        <position position="118"/>
    </location>
    <ligand>
        <name>Zn(2+)</name>
        <dbReference type="ChEBI" id="CHEBI:29105"/>
        <note>ligand shared between dimeric partners</note>
    </ligand>
</feature>
<sequence>MTLTFPAPSKDKAELETGPAFTPRFDEKGLVTAVVTDARDGELLMVAHMNAEALALTIETGIAHYYSRSRNSLWKKGESSGNTQAVQEIRTDCDQDAIWLKVTVAGHDATCHTGRRSCFYRTVGVENGKARVTITDEHRHFDPAQIYAEKKG</sequence>
<organism>
    <name type="scientific">Sinorhizobium fredii (strain NBRC 101917 / NGR234)</name>
    <dbReference type="NCBI Taxonomy" id="394"/>
    <lineage>
        <taxon>Bacteria</taxon>
        <taxon>Pseudomonadati</taxon>
        <taxon>Pseudomonadota</taxon>
        <taxon>Alphaproteobacteria</taxon>
        <taxon>Hyphomicrobiales</taxon>
        <taxon>Rhizobiaceae</taxon>
        <taxon>Sinorhizobium/Ensifer group</taxon>
        <taxon>Sinorhizobium</taxon>
    </lineage>
</organism>